<sequence>MPEPVKSAPVPKKGSKKAINKAQKKDGKKRKRSRKESYSVYVYKVLKQVHPDTGISSKAMGIMNSFVNDIFERIAGEASRLAHYNKRSTITSREIQTAVRLLLPGELAKHAVSEGTKAVTKYTSSK</sequence>
<evidence type="ECO:0000250" key="1">
    <source>
        <dbReference type="UniProtKB" id="P10854"/>
    </source>
</evidence>
<evidence type="ECO:0000250" key="2">
    <source>
        <dbReference type="UniProtKB" id="P23527"/>
    </source>
</evidence>
<evidence type="ECO:0000250" key="3">
    <source>
        <dbReference type="UniProtKB" id="P62807"/>
    </source>
</evidence>
<evidence type="ECO:0000250" key="4">
    <source>
        <dbReference type="UniProtKB" id="Q00729"/>
    </source>
</evidence>
<evidence type="ECO:0000250" key="5">
    <source>
        <dbReference type="UniProtKB" id="Q5QNW6"/>
    </source>
</evidence>
<evidence type="ECO:0000250" key="6">
    <source>
        <dbReference type="UniProtKB" id="Q64475"/>
    </source>
</evidence>
<evidence type="ECO:0000250" key="7">
    <source>
        <dbReference type="UniProtKB" id="Q6ZWY9"/>
    </source>
</evidence>
<evidence type="ECO:0000250" key="8">
    <source>
        <dbReference type="UniProtKB" id="Q96A08"/>
    </source>
</evidence>
<evidence type="ECO:0000256" key="9">
    <source>
        <dbReference type="SAM" id="MobiDB-lite"/>
    </source>
</evidence>
<evidence type="ECO:0000269" key="10">
    <source>
    </source>
</evidence>
<evidence type="ECO:0000269" key="11">
    <source>
    </source>
</evidence>
<evidence type="ECO:0000269" key="12">
    <source>
    </source>
</evidence>
<evidence type="ECO:0000269" key="13">
    <source>
    </source>
</evidence>
<evidence type="ECO:0000269" key="14">
    <source>
    </source>
</evidence>
<evidence type="ECO:0000269" key="15">
    <source>
    </source>
</evidence>
<evidence type="ECO:0000269" key="16">
    <source>
    </source>
</evidence>
<evidence type="ECO:0000269" key="17">
    <source>
    </source>
</evidence>
<evidence type="ECO:0000269" key="18">
    <source>
    </source>
</evidence>
<evidence type="ECO:0000269" key="19">
    <source>
    </source>
</evidence>
<evidence type="ECO:0000269" key="20">
    <source>
    </source>
</evidence>
<evidence type="ECO:0000269" key="21">
    <source>
    </source>
</evidence>
<evidence type="ECO:0000269" key="22">
    <source>
    </source>
</evidence>
<evidence type="ECO:0000269" key="23">
    <source>
    </source>
</evidence>
<evidence type="ECO:0000269" key="24">
    <source>
    </source>
</evidence>
<evidence type="ECO:0000269" key="25">
    <source>
    </source>
</evidence>
<evidence type="ECO:0000305" key="26"/>
<evidence type="ECO:0000312" key="27">
    <source>
        <dbReference type="HGNC" id="HGNC:4750"/>
    </source>
</evidence>
<evidence type="ECO:0007744" key="28">
    <source>
    </source>
</evidence>
<evidence type="ECO:0007744" key="29">
    <source>
    </source>
</evidence>
<organism>
    <name type="scientific">Homo sapiens</name>
    <name type="common">Human</name>
    <dbReference type="NCBI Taxonomy" id="9606"/>
    <lineage>
        <taxon>Eukaryota</taxon>
        <taxon>Metazoa</taxon>
        <taxon>Chordata</taxon>
        <taxon>Craniata</taxon>
        <taxon>Vertebrata</taxon>
        <taxon>Euteleostomi</taxon>
        <taxon>Mammalia</taxon>
        <taxon>Eutheria</taxon>
        <taxon>Euarchontoglires</taxon>
        <taxon>Primates</taxon>
        <taxon>Haplorrhini</taxon>
        <taxon>Catarrhini</taxon>
        <taxon>Hominidae</taxon>
        <taxon>Homo</taxon>
    </lineage>
</organism>
<reference key="1">
    <citation type="journal article" date="1997" name="Hum. Genet.">
        <title>The human histone gene cluster at the D6S105 locus.</title>
        <authorList>
            <person name="Albig W."/>
            <person name="Doenecke D."/>
        </authorList>
    </citation>
    <scope>NUCLEOTIDE SEQUENCE [GENOMIC DNA]</scope>
</reference>
<reference key="2">
    <citation type="journal article" date="2002" name="Genomics">
        <title>The human and mouse replication-dependent histone genes.</title>
        <authorList>
            <person name="Marzluff W.F."/>
            <person name="Gongidi P."/>
            <person name="Woods K.R."/>
            <person name="Jin J."/>
            <person name="Maltais L.J."/>
        </authorList>
    </citation>
    <scope>NUCLEOTIDE SEQUENCE [GENOMIC DNA]</scope>
</reference>
<reference key="3">
    <citation type="journal article" date="2003" name="Nature">
        <title>The DNA sequence and analysis of human chromosome 6.</title>
        <authorList>
            <person name="Mungall A.J."/>
            <person name="Palmer S.A."/>
            <person name="Sims S.K."/>
            <person name="Edwards C.A."/>
            <person name="Ashurst J.L."/>
            <person name="Wilming L."/>
            <person name="Jones M.C."/>
            <person name="Horton R."/>
            <person name="Hunt S.E."/>
            <person name="Scott C.E."/>
            <person name="Gilbert J.G.R."/>
            <person name="Clamp M.E."/>
            <person name="Bethel G."/>
            <person name="Milne S."/>
            <person name="Ainscough R."/>
            <person name="Almeida J.P."/>
            <person name="Ambrose K.D."/>
            <person name="Andrews T.D."/>
            <person name="Ashwell R.I.S."/>
            <person name="Babbage A.K."/>
            <person name="Bagguley C.L."/>
            <person name="Bailey J."/>
            <person name="Banerjee R."/>
            <person name="Barker D.J."/>
            <person name="Barlow K.F."/>
            <person name="Bates K."/>
            <person name="Beare D.M."/>
            <person name="Beasley H."/>
            <person name="Beasley O."/>
            <person name="Bird C.P."/>
            <person name="Blakey S.E."/>
            <person name="Bray-Allen S."/>
            <person name="Brook J."/>
            <person name="Brown A.J."/>
            <person name="Brown J.Y."/>
            <person name="Burford D.C."/>
            <person name="Burrill W."/>
            <person name="Burton J."/>
            <person name="Carder C."/>
            <person name="Carter N.P."/>
            <person name="Chapman J.C."/>
            <person name="Clark S.Y."/>
            <person name="Clark G."/>
            <person name="Clee C.M."/>
            <person name="Clegg S."/>
            <person name="Cobley V."/>
            <person name="Collier R.E."/>
            <person name="Collins J.E."/>
            <person name="Colman L.K."/>
            <person name="Corby N.R."/>
            <person name="Coville G.J."/>
            <person name="Culley K.M."/>
            <person name="Dhami P."/>
            <person name="Davies J."/>
            <person name="Dunn M."/>
            <person name="Earthrowl M.E."/>
            <person name="Ellington A.E."/>
            <person name="Evans K.A."/>
            <person name="Faulkner L."/>
            <person name="Francis M.D."/>
            <person name="Frankish A."/>
            <person name="Frankland J."/>
            <person name="French L."/>
            <person name="Garner P."/>
            <person name="Garnett J."/>
            <person name="Ghori M.J."/>
            <person name="Gilby L.M."/>
            <person name="Gillson C.J."/>
            <person name="Glithero R.J."/>
            <person name="Grafham D.V."/>
            <person name="Grant M."/>
            <person name="Gribble S."/>
            <person name="Griffiths C."/>
            <person name="Griffiths M.N.D."/>
            <person name="Hall R."/>
            <person name="Halls K.S."/>
            <person name="Hammond S."/>
            <person name="Harley J.L."/>
            <person name="Hart E.A."/>
            <person name="Heath P.D."/>
            <person name="Heathcott R."/>
            <person name="Holmes S.J."/>
            <person name="Howden P.J."/>
            <person name="Howe K.L."/>
            <person name="Howell G.R."/>
            <person name="Huckle E."/>
            <person name="Humphray S.J."/>
            <person name="Humphries M.D."/>
            <person name="Hunt A.R."/>
            <person name="Johnson C.M."/>
            <person name="Joy A.A."/>
            <person name="Kay M."/>
            <person name="Keenan S.J."/>
            <person name="Kimberley A.M."/>
            <person name="King A."/>
            <person name="Laird G.K."/>
            <person name="Langford C."/>
            <person name="Lawlor S."/>
            <person name="Leongamornlert D.A."/>
            <person name="Leversha M."/>
            <person name="Lloyd C.R."/>
            <person name="Lloyd D.M."/>
            <person name="Loveland J.E."/>
            <person name="Lovell J."/>
            <person name="Martin S."/>
            <person name="Mashreghi-Mohammadi M."/>
            <person name="Maslen G.L."/>
            <person name="Matthews L."/>
            <person name="McCann O.T."/>
            <person name="McLaren S.J."/>
            <person name="McLay K."/>
            <person name="McMurray A."/>
            <person name="Moore M.J.F."/>
            <person name="Mullikin J.C."/>
            <person name="Niblett D."/>
            <person name="Nickerson T."/>
            <person name="Novik K.L."/>
            <person name="Oliver K."/>
            <person name="Overton-Larty E.K."/>
            <person name="Parker A."/>
            <person name="Patel R."/>
            <person name="Pearce A.V."/>
            <person name="Peck A.I."/>
            <person name="Phillimore B.J.C.T."/>
            <person name="Phillips S."/>
            <person name="Plumb R.W."/>
            <person name="Porter K.M."/>
            <person name="Ramsey Y."/>
            <person name="Ranby S.A."/>
            <person name="Rice C.M."/>
            <person name="Ross M.T."/>
            <person name="Searle S.M."/>
            <person name="Sehra H.K."/>
            <person name="Sheridan E."/>
            <person name="Skuce C.D."/>
            <person name="Smith S."/>
            <person name="Smith M."/>
            <person name="Spraggon L."/>
            <person name="Squares S.L."/>
            <person name="Steward C.A."/>
            <person name="Sycamore N."/>
            <person name="Tamlyn-Hall G."/>
            <person name="Tester J."/>
            <person name="Theaker A.J."/>
            <person name="Thomas D.W."/>
            <person name="Thorpe A."/>
            <person name="Tracey A."/>
            <person name="Tromans A."/>
            <person name="Tubby B."/>
            <person name="Wall M."/>
            <person name="Wallis J.M."/>
            <person name="West A.P."/>
            <person name="White S.S."/>
            <person name="Whitehead S.L."/>
            <person name="Whittaker H."/>
            <person name="Wild A."/>
            <person name="Willey D.J."/>
            <person name="Wilmer T.E."/>
            <person name="Wood J.M."/>
            <person name="Wray P.W."/>
            <person name="Wyatt J.C."/>
            <person name="Young L."/>
            <person name="Younger R.M."/>
            <person name="Bentley D.R."/>
            <person name="Coulson A."/>
            <person name="Durbin R.M."/>
            <person name="Hubbard T."/>
            <person name="Sulston J.E."/>
            <person name="Dunham I."/>
            <person name="Rogers J."/>
            <person name="Beck S."/>
        </authorList>
    </citation>
    <scope>NUCLEOTIDE SEQUENCE [LARGE SCALE GENOMIC DNA]</scope>
</reference>
<reference key="4">
    <citation type="journal article" date="2004" name="Genome Res.">
        <title>The status, quality, and expansion of the NIH full-length cDNA project: the Mammalian Gene Collection (MGC).</title>
        <authorList>
            <consortium name="The MGC Project Team"/>
        </authorList>
    </citation>
    <scope>NUCLEOTIDE SEQUENCE [LARGE SCALE MRNA]</scope>
</reference>
<reference key="5">
    <citation type="submission" date="2007-03" db="UniProtKB">
        <authorList>
            <person name="Lubec G."/>
            <person name="Afjehi-Sadat L."/>
        </authorList>
    </citation>
    <scope>PROTEIN SEQUENCE OF 59-73</scope>
    <scope>IDENTIFICATION BY MASS SPECTROMETRY</scope>
    <source>
        <tissue>Brain</tissue>
        <tissue>Cajal-Retzius cell</tissue>
    </source>
</reference>
<reference key="6">
    <citation type="journal article" date="2003" name="Cell">
        <title>Apoptotic phosphorylation of histone H2B is mediated by mammalian sterile twenty kinase.</title>
        <authorList>
            <person name="Cheung W.L."/>
            <person name="Ajiro K."/>
            <person name="Samejima K."/>
            <person name="Kloc M."/>
            <person name="Cheung P."/>
            <person name="Mizzen C.A."/>
            <person name="Beeser A."/>
            <person name="Etkin L.D."/>
            <person name="Chernoff J."/>
            <person name="Earnshaw W.C."/>
            <person name="Allis C.D."/>
        </authorList>
    </citation>
    <scope>PHOSPHORYLATION AT SER-15</scope>
</reference>
<reference key="7">
    <citation type="journal article" date="2005" name="Mol. Cell">
        <title>Monoubiquitination of human histone H2B: the factors involved and their roles in HOX gene regulation.</title>
        <authorList>
            <person name="Zhu B."/>
            <person name="Zheng Y."/>
            <person name="Pham A.-D."/>
            <person name="Mandal S.S."/>
            <person name="Erdjument-Bromage H."/>
            <person name="Tempst P."/>
            <person name="Reinberg D."/>
        </authorList>
    </citation>
    <scope>UBIQUITINATION AT LYS-121</scope>
</reference>
<reference key="8">
    <citation type="journal article" date="2005" name="Mol. Cell. Biochem.">
        <title>Inhibition of core histones acetylation by carcinogenic nickel(II).</title>
        <authorList>
            <person name="Golebiowski F."/>
            <person name="Kasprzak K.S."/>
        </authorList>
    </citation>
    <scope>ACETYLATION AT LYS-6; LYS-13; LYS-16 AND LYS-21</scope>
</reference>
<reference key="9">
    <citation type="journal article" date="2006" name="Cell">
        <title>Histone H2B monoubiquitination functions cooperatively with FACT to regulate elongation by RNA polymerase II.</title>
        <authorList>
            <person name="Pavri R."/>
            <person name="Zhu B."/>
            <person name="Li G."/>
            <person name="Trojer P."/>
            <person name="Mandal S."/>
            <person name="Shilatifard A."/>
            <person name="Reinberg D."/>
        </authorList>
    </citation>
    <scope>UBIQUITINATION AT LYS-121</scope>
</reference>
<reference key="10">
    <citation type="journal article" date="2006" name="J. Proteome Res.">
        <title>Gene-specific characterization of human histone H2B by electron capture dissociation.</title>
        <authorList>
            <person name="Siuti N."/>
            <person name="Roth M.J."/>
            <person name="Mizzen C.A."/>
            <person name="Kelleher N.L."/>
            <person name="Pesavento J.J."/>
        </authorList>
    </citation>
    <scope>IDENTIFICATION BY MASS SPECTROMETRY</scope>
</reference>
<reference key="11">
    <citation type="journal article" date="2009" name="Science">
        <title>Lysine acetylation targets protein complexes and co-regulates major cellular functions.</title>
        <authorList>
            <person name="Choudhary C."/>
            <person name="Kumar C."/>
            <person name="Gnad F."/>
            <person name="Nielsen M.L."/>
            <person name="Rehman M."/>
            <person name="Walther T.C."/>
            <person name="Olsen J.V."/>
            <person name="Mann M."/>
        </authorList>
    </citation>
    <scope>ACETYLATION [LARGE SCALE ANALYSIS] AT LYS-6; LYS-13; LYS-16; LYS-17; LYS-21 AND LYS-24</scope>
    <scope>IDENTIFICATION BY MASS SPECTROMETRY [LARGE SCALE ANALYSIS]</scope>
</reference>
<reference key="12">
    <citation type="journal article" date="2011" name="Cell">
        <title>Identification of 67 histone marks and histone lysine crotonylation as a new type of histone modification.</title>
        <authorList>
            <person name="Tan M."/>
            <person name="Luo H."/>
            <person name="Lee S."/>
            <person name="Jin F."/>
            <person name="Yang J.S."/>
            <person name="Montellier E."/>
            <person name="Buchou T."/>
            <person name="Cheng Z."/>
            <person name="Rousseaux S."/>
            <person name="Rajagopal N."/>
            <person name="Lu Z."/>
            <person name="Ye Z."/>
            <person name="Zhu Q."/>
            <person name="Wysocka J."/>
            <person name="Ye Y."/>
            <person name="Khochbin S."/>
            <person name="Ren B."/>
            <person name="Zhao Y."/>
        </authorList>
    </citation>
    <scope>CROTONYLATION AT LYS-6; LYS-12; LYS-13; LYS-16; LYS-17; LYS-21; LYS-24 AND LYS-35</scope>
</reference>
<reference key="13">
    <citation type="journal article" date="2011" name="Mol. Cell">
        <title>The RING finger protein MSL2 in the MOF complex is an E3 ubiquitin ligase for H2B K34 and is involved in crosstalk with H3 K4 and K79 methylation.</title>
        <authorList>
            <person name="Wu L."/>
            <person name="Zee B.M."/>
            <person name="Wang Y."/>
            <person name="Garcia B.A."/>
            <person name="Dou Y."/>
        </authorList>
    </citation>
    <scope>UBIQUITINATION AT LYS-35</scope>
</reference>
<reference key="14">
    <citation type="journal article" date="2012" name="Mol. Cell. Proteomics">
        <title>Lysine succinylation and lysine malonylation in histones.</title>
        <authorList>
            <person name="Xie Z."/>
            <person name="Dai J."/>
            <person name="Dai L."/>
            <person name="Tan M."/>
            <person name="Cheng Z."/>
            <person name="Wu Y."/>
            <person name="Boeke J.D."/>
            <person name="Zhao Y."/>
        </authorList>
    </citation>
    <scope>SUCCINYLATION AT LYS-35; LYS-117 AND LYS-121</scope>
    <scope>MALONYLATION AT LYS-117</scope>
</reference>
<reference key="15">
    <citation type="journal article" date="2013" name="Genes Dev.">
        <title>USP49 deubiquitinates histone H2B and regulates cotranscriptional pre-mRNA splicing.</title>
        <authorList>
            <person name="Zhang Z."/>
            <person name="Jones A."/>
            <person name="Joo H.Y."/>
            <person name="Zhou D."/>
            <person name="Cao Y."/>
            <person name="Chen S."/>
            <person name="Erdjument-Bromage H."/>
            <person name="Renfrow M."/>
            <person name="He H."/>
            <person name="Tempst P."/>
            <person name="Townes T.M."/>
            <person name="Giles K.E."/>
            <person name="Ma L."/>
            <person name="Wang H."/>
        </authorList>
    </citation>
    <scope>UBIQUITINATION</scope>
    <scope>DEUBIQUITINATION BY USP49</scope>
</reference>
<reference key="16">
    <citation type="journal article" date="2014" name="Nat. Chem. Biol.">
        <title>Lysine 2-hydroxyisobutyrylation is a widely distributed active histone mark.</title>
        <authorList>
            <person name="Dai L."/>
            <person name="Peng C."/>
            <person name="Montellier E."/>
            <person name="Lu Z."/>
            <person name="Chen Y."/>
            <person name="Ishii H."/>
            <person name="Debernardi A."/>
            <person name="Buchou T."/>
            <person name="Rousseaux S."/>
            <person name="Jin F."/>
            <person name="Sabari B.R."/>
            <person name="Deng Z."/>
            <person name="Allis C.D."/>
            <person name="Ren B."/>
            <person name="Khochbin S."/>
            <person name="Zhao Y."/>
        </authorList>
    </citation>
    <scope>HYDROXYBUTYRYLATION AT LYS-6; LYS-13; LYS-21; LYS-24; LYS-25; LYS-35; LYS-44; LYS-47; LYS-58; LYS-86; LYS-109; LYS-117 AND LYS-121</scope>
</reference>
<reference key="17">
    <citation type="journal article" date="2016" name="Mol. Cell">
        <title>Dynamic competing histone H4 K5K8 acetylation and butyrylation are hallmarks of highly active gene promoters.</title>
        <authorList>
            <person name="Goudarzi A."/>
            <person name="Zhang D."/>
            <person name="Huang H."/>
            <person name="Barral S."/>
            <person name="Kwon O.K."/>
            <person name="Qi S."/>
            <person name="Tang Z."/>
            <person name="Buchou T."/>
            <person name="Vitte A.L."/>
            <person name="He T."/>
            <person name="Cheng Z."/>
            <person name="Montellier E."/>
            <person name="Gaucher J."/>
            <person name="Curtet S."/>
            <person name="Debernardi A."/>
            <person name="Charbonnier G."/>
            <person name="Puthier D."/>
            <person name="Petosa C."/>
            <person name="Panne D."/>
            <person name="Rousseaux S."/>
            <person name="Roeder R.G."/>
            <person name="Zhao Y."/>
            <person name="Khochbin S."/>
        </authorList>
    </citation>
    <scope>BUTYRYLATION AT LYS-6 AND LYS-21</scope>
</reference>
<reference key="18">
    <citation type="journal article" date="2016" name="Mol. Cell">
        <title>Metabolic regulation of gene expression by histone lysine beta-hydroxybutyrylation.</title>
        <authorList>
            <person name="Xie Z."/>
            <person name="Zhang D."/>
            <person name="Chung D."/>
            <person name="Tang Z."/>
            <person name="Huang H."/>
            <person name="Dai L."/>
            <person name="Qi S."/>
            <person name="Li J."/>
            <person name="Colak G."/>
            <person name="Chen Y."/>
            <person name="Xia C."/>
            <person name="Peng C."/>
            <person name="Ruan H."/>
            <person name="Kirkey M."/>
            <person name="Wang D."/>
            <person name="Jensen L.M."/>
            <person name="Kwon O.K."/>
            <person name="Lee S."/>
            <person name="Pletcher S.D."/>
            <person name="Tan M."/>
            <person name="Lombard D.B."/>
            <person name="White K.P."/>
            <person name="Zhao H."/>
            <person name="Li J."/>
            <person name="Roeder R.G."/>
            <person name="Yang X."/>
            <person name="Zhao Y."/>
        </authorList>
    </citation>
    <scope>HYDROXYBUTYRYLATION AT LYS-6; LYS-12; LYS-17; LYS-21; LYS-35; LYS-86; LYS-117 AND LYS-121</scope>
</reference>
<reference key="19">
    <citation type="journal article" date="2016" name="Nat. Chem. Biol.">
        <title>Serine is a new target residue for endogenous ADP-ribosylation on histones.</title>
        <authorList>
            <person name="Leidecker O."/>
            <person name="Bonfiglio J.J."/>
            <person name="Colby T."/>
            <person name="Zhang Q."/>
            <person name="Atanassov I."/>
            <person name="Zaja R."/>
            <person name="Palazzo L."/>
            <person name="Stockum A."/>
            <person name="Ahel I."/>
            <person name="Matic I."/>
        </authorList>
    </citation>
    <scope>ADP-RIBOSYLATION AT SER-7</scope>
</reference>
<reference key="20">
    <citation type="journal article" date="2017" name="Nat. Struct. Mol. Biol.">
        <title>Site-specific mapping of the human SUMO proteome reveals co-modification with phosphorylation.</title>
        <authorList>
            <person name="Hendriks I.A."/>
            <person name="Lyon D."/>
            <person name="Young C."/>
            <person name="Jensen L.J."/>
            <person name="Vertegaal A.C."/>
            <person name="Nielsen M.L."/>
        </authorList>
    </citation>
    <scope>SUMOYLATION [LARGE SCALE ANALYSIS] AT LYS-6</scope>
    <scope>IDENTIFICATION BY MASS SPECTROMETRY [LARGE SCALE ANALYSIS]</scope>
</reference>
<reference key="21">
    <citation type="journal article" date="2016" name="Nat. Commun.">
        <title>PARP3 is a sensor of nicked nucleosomes and monoribosylates histone H2B(Glu2).</title>
        <authorList>
            <person name="Grundy G.J."/>
            <person name="Polo L.M."/>
            <person name="Zeng Z."/>
            <person name="Rulten S.L."/>
            <person name="Hoch N.C."/>
            <person name="Paomephan P."/>
            <person name="Xu Y."/>
            <person name="Sweet S.M."/>
            <person name="Thorne A.W."/>
            <person name="Oliver A.W."/>
            <person name="Matthews S.J."/>
            <person name="Pearl L.H."/>
            <person name="Caldecott K.W."/>
        </authorList>
    </citation>
    <scope>ADP-RIBOSYLATION AT GLU-3</scope>
</reference>
<reference key="22">
    <citation type="journal article" date="2019" name="Mol. Cell">
        <title>Glutarylation of histone H4 lysine 91 regulates chromatin dynamics.</title>
        <authorList>
            <person name="Bao X."/>
            <person name="Liu Z."/>
            <person name="Zhang W."/>
            <person name="Gladysz K."/>
            <person name="Fung Y.M.E."/>
            <person name="Tian G."/>
            <person name="Xiong Y."/>
            <person name="Wong J.W.H."/>
            <person name="Yuen K.W.Y."/>
            <person name="Li X.D."/>
        </authorList>
    </citation>
    <scope>GLUTARYLATION AT LYS-17; LYS-35; LYS-44; LYS-47; LYS-109; LYS-117 AND LYS-121</scope>
</reference>
<reference key="23">
    <citation type="journal article" date="2019" name="Nature">
        <title>Metabolic regulation of gene expression by histone lactylation.</title>
        <authorList>
            <person name="Zhang D."/>
            <person name="Tang Z."/>
            <person name="Huang H."/>
            <person name="Zhou G."/>
            <person name="Cui C."/>
            <person name="Weng Y."/>
            <person name="Liu W."/>
            <person name="Kim S."/>
            <person name="Lee S."/>
            <person name="Perez-Neut M."/>
            <person name="Ding J."/>
            <person name="Czyz D."/>
            <person name="Hu R."/>
            <person name="Ye Z."/>
            <person name="He M."/>
            <person name="Zheng Y.G."/>
            <person name="Shuman H.A."/>
            <person name="Dai L."/>
            <person name="Ren B."/>
            <person name="Roeder R.G."/>
            <person name="Becker L."/>
            <person name="Zhao Y."/>
        </authorList>
    </citation>
    <scope>LACTYLATION AT LYS-6; LYS-12; LYS-16; LYS-17; LYS-21; LYS-24; LYS-44; LYS-86; LYS-109; LYS-117 AND LYS-121</scope>
</reference>
<reference key="24">
    <citation type="journal article" date="2021" name="Elife">
        <title>Serine ADP-ribosylation marks nucleosomes for ALC1-dependent chromatin remodeling.</title>
        <authorList>
            <person name="Mohapatra J."/>
            <person name="Tashiro K."/>
            <person name="Beckner R.L."/>
            <person name="Sierra J."/>
            <person name="Kilgore J.A."/>
            <person name="Williams N.S."/>
            <person name="Liszczak G."/>
        </authorList>
    </citation>
    <scope>ADP-RIBOSYLATION AT SER-7</scope>
</reference>
<reference key="25">
    <citation type="journal article" date="2006" name="Science">
        <title>The consensus coding sequences of human breast and colorectal cancers.</title>
        <authorList>
            <person name="Sjoeblom T."/>
            <person name="Jones S."/>
            <person name="Wood L.D."/>
            <person name="Parsons D.W."/>
            <person name="Lin J."/>
            <person name="Barber T.D."/>
            <person name="Mandelker D."/>
            <person name="Leary R.J."/>
            <person name="Ptak J."/>
            <person name="Silliman N."/>
            <person name="Szabo S."/>
            <person name="Buckhaults P."/>
            <person name="Farrell C."/>
            <person name="Meeh P."/>
            <person name="Markowitz S.D."/>
            <person name="Willis J."/>
            <person name="Dawson D."/>
            <person name="Willson J.K.V."/>
            <person name="Gazdar A.F."/>
            <person name="Hartigan J."/>
            <person name="Wu L."/>
            <person name="Liu C."/>
            <person name="Parmigiani G."/>
            <person name="Park B.H."/>
            <person name="Bachman K.E."/>
            <person name="Papadopoulos N."/>
            <person name="Vogelstein B."/>
            <person name="Kinzler K.W."/>
            <person name="Velculescu V.E."/>
        </authorList>
    </citation>
    <scope>VARIANT [LARGE SCALE ANALYSIS] TYR-110</scope>
</reference>
<keyword id="KW-0007">Acetylation</keyword>
<keyword id="KW-0013">ADP-ribosylation</keyword>
<keyword id="KW-0158">Chromosome</keyword>
<keyword id="KW-0903">Direct protein sequencing</keyword>
<keyword id="KW-0238">DNA-binding</keyword>
<keyword id="KW-0325">Glycoprotein</keyword>
<keyword id="KW-0379">Hydroxylation</keyword>
<keyword id="KW-1017">Isopeptide bond</keyword>
<keyword id="KW-0488">Methylation</keyword>
<keyword id="KW-0544">Nucleosome core</keyword>
<keyword id="KW-0539">Nucleus</keyword>
<keyword id="KW-0597">Phosphoprotein</keyword>
<keyword id="KW-1267">Proteomics identification</keyword>
<keyword id="KW-1185">Reference proteome</keyword>
<keyword id="KW-0832">Ubl conjugation</keyword>
<proteinExistence type="evidence at protein level"/>
<name>H2B1M_HUMAN</name>
<accession>Q99879</accession>
<accession>Q6NWQ3</accession>
<gene>
    <name evidence="27" type="primary">H2BC14</name>
    <name evidence="27" type="synonym">H2BFE</name>
    <name evidence="27" type="synonym">HIST1H2BM</name>
</gene>
<dbReference type="EMBL" id="Z83738">
    <property type="protein sequence ID" value="CAB06033.1"/>
    <property type="molecule type" value="Genomic_DNA"/>
</dbReference>
<dbReference type="EMBL" id="AF531296">
    <property type="protein sequence ID" value="AAN06696.1"/>
    <property type="molecule type" value="Genomic_DNA"/>
</dbReference>
<dbReference type="EMBL" id="AL049822">
    <property type="status" value="NOT_ANNOTATED_CDS"/>
    <property type="molecule type" value="Genomic_DNA"/>
</dbReference>
<dbReference type="EMBL" id="BC066244">
    <property type="protein sequence ID" value="AAH66244.1"/>
    <property type="molecule type" value="mRNA"/>
</dbReference>
<dbReference type="EMBL" id="BC067486">
    <property type="protein sequence ID" value="AAH67486.1"/>
    <property type="molecule type" value="mRNA"/>
</dbReference>
<dbReference type="EMBL" id="BC067487">
    <property type="protein sequence ID" value="AAH67487.1"/>
    <property type="molecule type" value="mRNA"/>
</dbReference>
<dbReference type="EMBL" id="BC067488">
    <property type="protein sequence ID" value="AAH67488.1"/>
    <property type="molecule type" value="mRNA"/>
</dbReference>
<dbReference type="EMBL" id="BC067489">
    <property type="protein sequence ID" value="AAH67489.1"/>
    <property type="molecule type" value="mRNA"/>
</dbReference>
<dbReference type="CCDS" id="CCDS4629.1"/>
<dbReference type="RefSeq" id="NP_003512.1">
    <property type="nucleotide sequence ID" value="NM_003521.3"/>
</dbReference>
<dbReference type="SMR" id="Q99879"/>
<dbReference type="BioGRID" id="113938">
    <property type="interactions" value="105"/>
</dbReference>
<dbReference type="CORUM" id="Q99879"/>
<dbReference type="FunCoup" id="Q99879">
    <property type="interactions" value="1335"/>
</dbReference>
<dbReference type="IntAct" id="Q99879">
    <property type="interactions" value="48"/>
</dbReference>
<dbReference type="MINT" id="Q99879"/>
<dbReference type="STRING" id="9606.ENSP00000477907"/>
<dbReference type="GlyCosmos" id="Q99879">
    <property type="glycosylation" value="1 site, No reported glycans"/>
</dbReference>
<dbReference type="GlyGen" id="Q99879">
    <property type="glycosylation" value="2 sites, 1 O-linked glycan (1 site)"/>
</dbReference>
<dbReference type="iPTMnet" id="Q99879"/>
<dbReference type="MetOSite" id="Q99879"/>
<dbReference type="PhosphoSitePlus" id="Q99879"/>
<dbReference type="SwissPalm" id="Q99879"/>
<dbReference type="BioMuta" id="HIST1H2BM"/>
<dbReference type="DMDM" id="7387742"/>
<dbReference type="jPOST" id="Q99879"/>
<dbReference type="MassIVE" id="Q99879"/>
<dbReference type="PaxDb" id="9606-ENSP00000477907"/>
<dbReference type="PeptideAtlas" id="Q99879"/>
<dbReference type="ProteomicsDB" id="78516"/>
<dbReference type="Pumba" id="Q99879"/>
<dbReference type="TopDownProteomics" id="Q99879"/>
<dbReference type="Antibodypedia" id="74509">
    <property type="antibodies" value="32 antibodies from 12 providers"/>
</dbReference>
<dbReference type="DNASU" id="8342"/>
<dbReference type="Ensembl" id="ENST00000621112.2">
    <property type="protein sequence ID" value="ENSP00000477907.2"/>
    <property type="gene ID" value="ENSG00000273703.2"/>
</dbReference>
<dbReference type="GeneID" id="8342"/>
<dbReference type="KEGG" id="hsa:8342"/>
<dbReference type="MANE-Select" id="ENST00000621112.2">
    <property type="protein sequence ID" value="ENSP00000477907.2"/>
    <property type="RefSeq nucleotide sequence ID" value="NM_003521.3"/>
    <property type="RefSeq protein sequence ID" value="NP_003512.1"/>
</dbReference>
<dbReference type="UCSC" id="uc003njo.4">
    <property type="organism name" value="human"/>
</dbReference>
<dbReference type="AGR" id="HGNC:4750"/>
<dbReference type="CTD" id="8342"/>
<dbReference type="GeneCards" id="H2BC14"/>
<dbReference type="HGNC" id="HGNC:4750">
    <property type="gene designation" value="H2BC14"/>
</dbReference>
<dbReference type="HPA" id="ENSG00000273703">
    <property type="expression patterns" value="Tissue enhanced (bone marrow, choroid plexus, lymphoid tissue)"/>
</dbReference>
<dbReference type="MIM" id="602802">
    <property type="type" value="gene"/>
</dbReference>
<dbReference type="neXtProt" id="NX_Q99879"/>
<dbReference type="OpenTargets" id="ENSG00000273703"/>
<dbReference type="PharmGKB" id="PA29125"/>
<dbReference type="VEuPathDB" id="HostDB:ENSG00000273703"/>
<dbReference type="eggNOG" id="KOG1744">
    <property type="taxonomic scope" value="Eukaryota"/>
</dbReference>
<dbReference type="GeneTree" id="ENSGT01110000267152"/>
<dbReference type="HOGENOM" id="CLU_075666_2_1_1"/>
<dbReference type="InParanoid" id="Q99879"/>
<dbReference type="OMA" id="QTILCHY"/>
<dbReference type="OrthoDB" id="9536682at2759"/>
<dbReference type="PAN-GO" id="Q99879">
    <property type="GO annotations" value="2 GO annotations based on evolutionary models"/>
</dbReference>
<dbReference type="PhylomeDB" id="Q99879"/>
<dbReference type="TreeFam" id="TF300212"/>
<dbReference type="PathwayCommons" id="Q99879"/>
<dbReference type="Reactome" id="R-HSA-110328">
    <property type="pathway name" value="Recognition and association of DNA glycosylase with site containing an affected pyrimidine"/>
</dbReference>
<dbReference type="Reactome" id="R-HSA-110329">
    <property type="pathway name" value="Cleavage of the damaged pyrimidine"/>
</dbReference>
<dbReference type="Reactome" id="R-HSA-110330">
    <property type="pathway name" value="Recognition and association of DNA glycosylase with site containing an affected purine"/>
</dbReference>
<dbReference type="Reactome" id="R-HSA-110331">
    <property type="pathway name" value="Cleavage of the damaged purine"/>
</dbReference>
<dbReference type="Reactome" id="R-HSA-1221632">
    <property type="pathway name" value="Meiotic synapsis"/>
</dbReference>
<dbReference type="Reactome" id="R-HSA-171306">
    <property type="pathway name" value="Packaging Of Telomere Ends"/>
</dbReference>
<dbReference type="Reactome" id="R-HSA-1912408">
    <property type="pathway name" value="Pre-NOTCH Transcription and Translation"/>
</dbReference>
<dbReference type="Reactome" id="R-HSA-201722">
    <property type="pathway name" value="Formation of the beta-catenin:TCF transactivating complex"/>
</dbReference>
<dbReference type="Reactome" id="R-HSA-212300">
    <property type="pathway name" value="PRC2 methylates histones and DNA"/>
</dbReference>
<dbReference type="Reactome" id="R-HSA-2299718">
    <property type="pathway name" value="Condensation of Prophase Chromosomes"/>
</dbReference>
<dbReference type="Reactome" id="R-HSA-2559580">
    <property type="pathway name" value="Oxidative Stress Induced Senescence"/>
</dbReference>
<dbReference type="Reactome" id="R-HSA-2559582">
    <property type="pathway name" value="Senescence-Associated Secretory Phenotype (SASP)"/>
</dbReference>
<dbReference type="Reactome" id="R-HSA-2559586">
    <property type="pathway name" value="DNA Damage/Telomere Stress Induced Senescence"/>
</dbReference>
<dbReference type="Reactome" id="R-HSA-3214815">
    <property type="pathway name" value="HDACs deacetylate histones"/>
</dbReference>
<dbReference type="Reactome" id="R-HSA-3214847">
    <property type="pathway name" value="HATs acetylate histones"/>
</dbReference>
<dbReference type="Reactome" id="R-HSA-427359">
    <property type="pathway name" value="SIRT1 negatively regulates rRNA expression"/>
</dbReference>
<dbReference type="Reactome" id="R-HSA-427389">
    <property type="pathway name" value="ERCC6 (CSB) and EHMT2 (G9a) positively regulate rRNA expression"/>
</dbReference>
<dbReference type="Reactome" id="R-HSA-427413">
    <property type="pathway name" value="NoRC negatively regulates rRNA expression"/>
</dbReference>
<dbReference type="Reactome" id="R-HSA-5250924">
    <property type="pathway name" value="B-WICH complex positively regulates rRNA expression"/>
</dbReference>
<dbReference type="Reactome" id="R-HSA-5334118">
    <property type="pathway name" value="DNA methylation"/>
</dbReference>
<dbReference type="Reactome" id="R-HSA-5578749">
    <property type="pathway name" value="Transcriptional regulation by small RNAs"/>
</dbReference>
<dbReference type="Reactome" id="R-HSA-5617472">
    <property type="pathway name" value="Activation of anterior HOX genes in hindbrain development during early embryogenesis"/>
</dbReference>
<dbReference type="Reactome" id="R-HSA-5625886">
    <property type="pathway name" value="Activated PKN1 stimulates transcription of AR (androgen receptor) regulated genes KLK2 and KLK3"/>
</dbReference>
<dbReference type="Reactome" id="R-HSA-5689880">
    <property type="pathway name" value="Ub-specific processing proteases"/>
</dbReference>
<dbReference type="Reactome" id="R-HSA-5693565">
    <property type="pathway name" value="Recruitment and ATM-mediated phosphorylation of repair and signaling proteins at DNA double strand breaks"/>
</dbReference>
<dbReference type="Reactome" id="R-HSA-5693571">
    <property type="pathway name" value="Nonhomologous End-Joining (NHEJ)"/>
</dbReference>
<dbReference type="Reactome" id="R-HSA-5693607">
    <property type="pathway name" value="Processing of DNA double-strand break ends"/>
</dbReference>
<dbReference type="Reactome" id="R-HSA-606279">
    <property type="pathway name" value="Deposition of new CENPA-containing nucleosomes at the centromere"/>
</dbReference>
<dbReference type="Reactome" id="R-HSA-68616">
    <property type="pathway name" value="Assembly of the ORC complex at the origin of replication"/>
</dbReference>
<dbReference type="Reactome" id="R-HSA-69473">
    <property type="pathway name" value="G2/M DNA damage checkpoint"/>
</dbReference>
<dbReference type="Reactome" id="R-HSA-73728">
    <property type="pathway name" value="RNA Polymerase I Promoter Opening"/>
</dbReference>
<dbReference type="Reactome" id="R-HSA-73772">
    <property type="pathway name" value="RNA Polymerase I Promoter Escape"/>
</dbReference>
<dbReference type="Reactome" id="R-HSA-8866654">
    <property type="pathway name" value="E3 ubiquitin ligases ubiquitinate target proteins"/>
</dbReference>
<dbReference type="Reactome" id="R-HSA-8936459">
    <property type="pathway name" value="RUNX1 regulates genes involved in megakaryocyte differentiation and platelet function"/>
</dbReference>
<dbReference type="Reactome" id="R-HSA-8939236">
    <property type="pathway name" value="RUNX1 regulates transcription of genes involved in differentiation of HSCs"/>
</dbReference>
<dbReference type="Reactome" id="R-HSA-9018519">
    <property type="pathway name" value="Estrogen-dependent gene expression"/>
</dbReference>
<dbReference type="Reactome" id="R-HSA-912446">
    <property type="pathway name" value="Meiotic recombination"/>
</dbReference>
<dbReference type="Reactome" id="R-HSA-9609690">
    <property type="pathway name" value="HCMV Early Events"/>
</dbReference>
<dbReference type="Reactome" id="R-HSA-9610379">
    <property type="pathway name" value="HCMV Late Events"/>
</dbReference>
<dbReference type="Reactome" id="R-HSA-9616222">
    <property type="pathway name" value="Transcriptional regulation of granulopoiesis"/>
</dbReference>
<dbReference type="Reactome" id="R-HSA-9670095">
    <property type="pathway name" value="Inhibition of DNA recombination at telomere"/>
</dbReference>
<dbReference type="Reactome" id="R-HSA-9710421">
    <property type="pathway name" value="Defective pyroptosis"/>
</dbReference>
<dbReference type="Reactome" id="R-HSA-977225">
    <property type="pathway name" value="Amyloid fiber formation"/>
</dbReference>
<dbReference type="Reactome" id="R-HSA-9821002">
    <property type="pathway name" value="Chromatin modifications during the maternal to zygotic transition (MZT)"/>
</dbReference>
<dbReference type="Reactome" id="R-HSA-9821993">
    <property type="pathway name" value="Replacement of protamines by nucleosomes in the male pronucleus"/>
</dbReference>
<dbReference type="Reactome" id="R-HSA-9841922">
    <property type="pathway name" value="MLL4 and MLL3 complexes regulate expression of PPARG target genes in adipogenesis and hepatic steatosis"/>
</dbReference>
<dbReference type="Reactome" id="R-HSA-9843940">
    <property type="pathway name" value="Regulation of endogenous retroelements by KRAB-ZFP proteins"/>
</dbReference>
<dbReference type="Reactome" id="R-HSA-9843970">
    <property type="pathway name" value="Regulation of endogenous retroelements by the Human Silencing Hub (HUSH) complex"/>
</dbReference>
<dbReference type="Reactome" id="R-HSA-9845323">
    <property type="pathway name" value="Regulation of endogenous retroelements by Piwi-interacting RNAs (piRNAs)"/>
</dbReference>
<dbReference type="SignaLink" id="Q99879"/>
<dbReference type="SIGNOR" id="Q99879"/>
<dbReference type="BioGRID-ORCS" id="8342">
    <property type="hits" value="331 hits in 1101 CRISPR screens"/>
</dbReference>
<dbReference type="CD-CODE" id="91857CE7">
    <property type="entry name" value="Nucleolus"/>
</dbReference>
<dbReference type="GeneWiki" id="HIST1H2BM"/>
<dbReference type="GenomeRNAi" id="8342"/>
<dbReference type="Pharos" id="Q99879">
    <property type="development level" value="Tdark"/>
</dbReference>
<dbReference type="PRO" id="PR:Q99879"/>
<dbReference type="Proteomes" id="UP000005640">
    <property type="component" value="Chromosome 6"/>
</dbReference>
<dbReference type="RNAct" id="Q99879">
    <property type="molecule type" value="protein"/>
</dbReference>
<dbReference type="Bgee" id="ENSG00000273703">
    <property type="expression patterns" value="Expressed in bone marrow cell and 116 other cell types or tissues"/>
</dbReference>
<dbReference type="GO" id="GO:0005829">
    <property type="term" value="C:cytosol"/>
    <property type="evidence" value="ECO:0000314"/>
    <property type="project" value="HPA"/>
</dbReference>
<dbReference type="GO" id="GO:0070062">
    <property type="term" value="C:extracellular exosome"/>
    <property type="evidence" value="ECO:0007005"/>
    <property type="project" value="UniProtKB"/>
</dbReference>
<dbReference type="GO" id="GO:0005654">
    <property type="term" value="C:nucleoplasm"/>
    <property type="evidence" value="ECO:0000314"/>
    <property type="project" value="HPA"/>
</dbReference>
<dbReference type="GO" id="GO:0000786">
    <property type="term" value="C:nucleosome"/>
    <property type="evidence" value="ECO:0000303"/>
    <property type="project" value="UniProtKB"/>
</dbReference>
<dbReference type="GO" id="GO:0005634">
    <property type="term" value="C:nucleus"/>
    <property type="evidence" value="ECO:0000314"/>
    <property type="project" value="UniProtKB"/>
</dbReference>
<dbReference type="GO" id="GO:0003677">
    <property type="term" value="F:DNA binding"/>
    <property type="evidence" value="ECO:0000303"/>
    <property type="project" value="UniProtKB"/>
</dbReference>
<dbReference type="GO" id="GO:0046982">
    <property type="term" value="F:protein heterodimerization activity"/>
    <property type="evidence" value="ECO:0007669"/>
    <property type="project" value="InterPro"/>
</dbReference>
<dbReference type="GO" id="GO:0030527">
    <property type="term" value="F:structural constituent of chromatin"/>
    <property type="evidence" value="ECO:0007669"/>
    <property type="project" value="InterPro"/>
</dbReference>
<dbReference type="GO" id="GO:0006334">
    <property type="term" value="P:nucleosome assembly"/>
    <property type="evidence" value="ECO:0000303"/>
    <property type="project" value="UniProtKB"/>
</dbReference>
<dbReference type="CDD" id="cd22910">
    <property type="entry name" value="HFD_H2B"/>
    <property type="match status" value="1"/>
</dbReference>
<dbReference type="FunFam" id="1.10.20.10:FF:000003">
    <property type="entry name" value="Histone H2B"/>
    <property type="match status" value="1"/>
</dbReference>
<dbReference type="Gene3D" id="1.10.20.10">
    <property type="entry name" value="Histone, subunit A"/>
    <property type="match status" value="1"/>
</dbReference>
<dbReference type="InterPro" id="IPR009072">
    <property type="entry name" value="Histone-fold"/>
</dbReference>
<dbReference type="InterPro" id="IPR007125">
    <property type="entry name" value="Histone_H2A/H2B/H3"/>
</dbReference>
<dbReference type="InterPro" id="IPR000558">
    <property type="entry name" value="Histone_H2B"/>
</dbReference>
<dbReference type="InterPro" id="IPR055333">
    <property type="entry name" value="HISTONE_H2B_site"/>
</dbReference>
<dbReference type="PANTHER" id="PTHR23428">
    <property type="entry name" value="HISTONE H2B"/>
    <property type="match status" value="1"/>
</dbReference>
<dbReference type="Pfam" id="PF00125">
    <property type="entry name" value="Histone"/>
    <property type="match status" value="1"/>
</dbReference>
<dbReference type="PRINTS" id="PR00621">
    <property type="entry name" value="HISTONEH2B"/>
</dbReference>
<dbReference type="SMART" id="SM00427">
    <property type="entry name" value="H2B"/>
    <property type="match status" value="1"/>
</dbReference>
<dbReference type="SUPFAM" id="SSF47113">
    <property type="entry name" value="Histone-fold"/>
    <property type="match status" value="1"/>
</dbReference>
<dbReference type="PROSITE" id="PS00357">
    <property type="entry name" value="HISTONE_H2B"/>
    <property type="match status" value="1"/>
</dbReference>
<protein>
    <recommendedName>
        <fullName>Histone H2B type 1-M</fullName>
    </recommendedName>
    <alternativeName>
        <fullName>Histone H2B.e</fullName>
        <shortName>H2B/e</shortName>
    </alternativeName>
</protein>
<feature type="initiator methionine" description="Removed" evidence="2">
    <location>
        <position position="1"/>
    </location>
</feature>
<feature type="chain" id="PRO_0000071831" description="Histone H2B type 1-M">
    <location>
        <begin position="2"/>
        <end position="126"/>
    </location>
</feature>
<feature type="region of interest" description="Disordered" evidence="9">
    <location>
        <begin position="1"/>
        <end position="36"/>
    </location>
</feature>
<feature type="modified residue" description="N-acetylproline" evidence="2">
    <location>
        <position position="2"/>
    </location>
</feature>
<feature type="modified residue" description="ADP-ribosyl glutamic acid" evidence="21">
    <location>
        <position position="3"/>
    </location>
</feature>
<feature type="modified residue" description="N6-(2-hydroxyisobutyryl)lysine; alternate" evidence="18">
    <location>
        <position position="6"/>
    </location>
</feature>
<feature type="modified residue" description="N6-(beta-hydroxybutyryl)lysine; alternate" evidence="20">
    <location>
        <position position="6"/>
    </location>
</feature>
<feature type="modified residue" description="N6-acetyllysine; alternate" evidence="11 28">
    <location>
        <position position="6"/>
    </location>
</feature>
<feature type="modified residue" description="N6-butyryllysine; alternate" evidence="19">
    <location>
        <position position="6"/>
    </location>
</feature>
<feature type="modified residue" description="N6-crotonyllysine; alternate" evidence="16">
    <location>
        <position position="6"/>
    </location>
</feature>
<feature type="modified residue" description="N6-lactoyllysine; alternate" evidence="24">
    <location>
        <position position="6"/>
    </location>
</feature>
<feature type="modified residue" description="ADP-ribosylserine" evidence="22 25">
    <location>
        <position position="7"/>
    </location>
</feature>
<feature type="modified residue" description="N6-(beta-hydroxybutyryl)lysine; alternate" evidence="20">
    <location>
        <position position="12"/>
    </location>
</feature>
<feature type="modified residue" description="N6-acetyllysine; alternate" evidence="1">
    <location>
        <position position="12"/>
    </location>
</feature>
<feature type="modified residue" description="N6-crotonyllysine; alternate" evidence="16">
    <location>
        <position position="12"/>
    </location>
</feature>
<feature type="modified residue" description="N6-lactoyllysine; alternate" evidence="24">
    <location>
        <position position="12"/>
    </location>
</feature>
<feature type="modified residue" description="N6-(2-hydroxyisobutyryl)lysine; alternate" evidence="18">
    <location>
        <position position="13"/>
    </location>
</feature>
<feature type="modified residue" description="N6-acetyllysine; alternate" evidence="11 28">
    <location>
        <position position="13"/>
    </location>
</feature>
<feature type="modified residue" description="N6-crotonyllysine; alternate" evidence="16">
    <location>
        <position position="13"/>
    </location>
</feature>
<feature type="modified residue" description="Phosphoserine; by STK4/MST1" evidence="10">
    <location>
        <position position="15"/>
    </location>
</feature>
<feature type="modified residue" description="N6-acetyllysine; alternate" evidence="11 28">
    <location>
        <position position="16"/>
    </location>
</feature>
<feature type="modified residue" description="N6-crotonyllysine; alternate" evidence="16">
    <location>
        <position position="16"/>
    </location>
</feature>
<feature type="modified residue" description="N6-lactoyllysine; alternate" evidence="24">
    <location>
        <position position="16"/>
    </location>
</feature>
<feature type="modified residue" description="N6-(beta-hydroxybutyryl)lysine; alternate" evidence="20">
    <location>
        <position position="17"/>
    </location>
</feature>
<feature type="modified residue" description="N6-acetyllysine; alternate" evidence="28">
    <location>
        <position position="17"/>
    </location>
</feature>
<feature type="modified residue" description="N6-crotonyllysine; alternate" evidence="16">
    <location>
        <position position="17"/>
    </location>
</feature>
<feature type="modified residue" description="N6-glutaryllysine; alternate" evidence="23">
    <location>
        <position position="17"/>
    </location>
</feature>
<feature type="modified residue" description="N6-lactoyllysine; alternate" evidence="24">
    <location>
        <position position="17"/>
    </location>
</feature>
<feature type="modified residue" description="N6-(2-hydroxyisobutyryl)lysine; alternate" evidence="18">
    <location>
        <position position="21"/>
    </location>
</feature>
<feature type="modified residue" description="N6-(beta-hydroxybutyryl)lysine; alternate" evidence="20">
    <location>
        <position position="21"/>
    </location>
</feature>
<feature type="modified residue" description="N6-acetyllysine; alternate" evidence="11 28">
    <location>
        <position position="21"/>
    </location>
</feature>
<feature type="modified residue" description="N6-butyryllysine; alternate" evidence="19">
    <location>
        <position position="21"/>
    </location>
</feature>
<feature type="modified residue" description="N6-crotonyllysine; alternate" evidence="16">
    <location>
        <position position="21"/>
    </location>
</feature>
<feature type="modified residue" description="N6-lactoyllysine; alternate" evidence="24">
    <location>
        <position position="21"/>
    </location>
</feature>
<feature type="modified residue" description="N6-(2-hydroxyisobutyryl)lysine; alternate" evidence="18">
    <location>
        <position position="24"/>
    </location>
</feature>
<feature type="modified residue" description="N6-acetyllysine; alternate" evidence="28">
    <location>
        <position position="24"/>
    </location>
</feature>
<feature type="modified residue" description="N6-crotonyllysine; alternate" evidence="16">
    <location>
        <position position="24"/>
    </location>
</feature>
<feature type="modified residue" description="N6-lactoyllysine; alternate" evidence="24">
    <location>
        <position position="24"/>
    </location>
</feature>
<feature type="modified residue" description="N6-(2-hydroxyisobutyryl)lysine" evidence="18">
    <location>
        <position position="25"/>
    </location>
</feature>
<feature type="modified residue" description="N6-(2-hydroxyisobutyryl)lysine; alternate" evidence="18">
    <location>
        <position position="35"/>
    </location>
</feature>
<feature type="modified residue" description="N6-(beta-hydroxybutyryl)lysine; alternate" evidence="20">
    <location>
        <position position="35"/>
    </location>
</feature>
<feature type="modified residue" description="N6-crotonyllysine; alternate" evidence="16">
    <location>
        <position position="35"/>
    </location>
</feature>
<feature type="modified residue" description="N6-glutaryllysine; alternate" evidence="23">
    <location>
        <position position="35"/>
    </location>
</feature>
<feature type="modified residue" description="N6-succinyllysine; alternate" evidence="17">
    <location>
        <position position="35"/>
    </location>
</feature>
<feature type="modified residue" description="PolyADP-ribosyl glutamic acid" evidence="6">
    <location>
        <position position="36"/>
    </location>
</feature>
<feature type="modified residue" description="Phosphoserine; by AMPK" evidence="1">
    <location>
        <position position="37"/>
    </location>
</feature>
<feature type="modified residue" description="N6-(2-hydroxyisobutyryl)lysine; alternate" evidence="18">
    <location>
        <position position="44"/>
    </location>
</feature>
<feature type="modified residue" description="N6-glutaryllysine; alternate" evidence="23">
    <location>
        <position position="44"/>
    </location>
</feature>
<feature type="modified residue" description="N6-lactoyllysine; alternate" evidence="24">
    <location>
        <position position="44"/>
    </location>
</feature>
<feature type="modified residue" description="N6-(2-hydroxyisobutyryl)lysine; alternate" evidence="18">
    <location>
        <position position="47"/>
    </location>
</feature>
<feature type="modified residue" description="N6-glutaryllysine; alternate" evidence="23">
    <location>
        <position position="47"/>
    </location>
</feature>
<feature type="modified residue" description="N6-methyllysine; alternate" evidence="3">
    <location>
        <position position="47"/>
    </location>
</feature>
<feature type="modified residue" description="N6,N6-dimethyllysine; alternate" evidence="3">
    <location>
        <position position="58"/>
    </location>
</feature>
<feature type="modified residue" description="N6-(2-hydroxyisobutyryl)lysine; alternate" evidence="18">
    <location>
        <position position="58"/>
    </location>
</feature>
<feature type="modified residue" description="Dimethylated arginine" evidence="8">
    <location>
        <position position="80"/>
    </location>
</feature>
<feature type="modified residue" description="N6,N6,N6-trimethyllysine; alternate" evidence="8">
    <location>
        <position position="86"/>
    </location>
</feature>
<feature type="modified residue" description="N6-(2-hydroxyisobutyryl)lysine; alternate" evidence="18">
    <location>
        <position position="86"/>
    </location>
</feature>
<feature type="modified residue" description="N6-(beta-hydroxybutyryl)lysine; alternate" evidence="20">
    <location>
        <position position="86"/>
    </location>
</feature>
<feature type="modified residue" description="N6-acetyllysine; alternate" evidence="8">
    <location>
        <position position="86"/>
    </location>
</feature>
<feature type="modified residue" description="N6-lactoyllysine; alternate" evidence="24">
    <location>
        <position position="86"/>
    </location>
</feature>
<feature type="modified residue" description="Omega-N-methylarginine" evidence="8">
    <location>
        <position position="87"/>
    </location>
</feature>
<feature type="modified residue" description="Omega-N-methylarginine" evidence="8">
    <location>
        <position position="93"/>
    </location>
</feature>
<feature type="modified residue" description="N6-(2-hydroxyisobutyryl)lysine; alternate" evidence="18">
    <location>
        <position position="109"/>
    </location>
</feature>
<feature type="modified residue" description="N6-glutaryllysine; alternate" evidence="23">
    <location>
        <position position="109"/>
    </location>
</feature>
<feature type="modified residue" description="N6-lactoyllysine; alternate" evidence="24">
    <location>
        <position position="109"/>
    </location>
</feature>
<feature type="modified residue" description="N6-methyllysine; alternate" evidence="3">
    <location>
        <position position="109"/>
    </location>
</feature>
<feature type="modified residue" description="Phosphothreonine" evidence="4">
    <location>
        <position position="116"/>
    </location>
</feature>
<feature type="modified residue" description="N6-(2-hydroxyisobutyryl)lysine; alternate" evidence="18">
    <location>
        <position position="117"/>
    </location>
</feature>
<feature type="modified residue" description="N6-(beta-hydroxybutyryl)lysine; alternate" evidence="20">
    <location>
        <position position="117"/>
    </location>
</feature>
<feature type="modified residue" description="N6-glutaryllysine; alternate" evidence="23">
    <location>
        <position position="117"/>
    </location>
</feature>
<feature type="modified residue" description="N6-lactoyllysine; alternate" evidence="24">
    <location>
        <position position="117"/>
    </location>
</feature>
<feature type="modified residue" description="N6-malonyllysine; alternate" evidence="17">
    <location>
        <position position="117"/>
    </location>
</feature>
<feature type="modified residue" description="N6-methylated lysine; alternate" evidence="4">
    <location>
        <position position="117"/>
    </location>
</feature>
<feature type="modified residue" description="N6-succinyllysine; alternate" evidence="17">
    <location>
        <position position="117"/>
    </location>
</feature>
<feature type="modified residue" description="N6-(2-hydroxyisobutyryl)lysine; alternate" evidence="18">
    <location>
        <position position="121"/>
    </location>
</feature>
<feature type="modified residue" description="N6-(beta-hydroxybutyryl)lysine; alternate" evidence="20">
    <location>
        <position position="121"/>
    </location>
</feature>
<feature type="modified residue" description="N6-glutaryllysine; alternate" evidence="23">
    <location>
        <position position="121"/>
    </location>
</feature>
<feature type="modified residue" description="N6-lactoyllysine; alternate" evidence="24">
    <location>
        <position position="121"/>
    </location>
</feature>
<feature type="modified residue" description="N6-succinyllysine; alternate" evidence="17">
    <location>
        <position position="121"/>
    </location>
</feature>
<feature type="glycosylation site" description="O-linked (GlcNAc) serine" evidence="3">
    <location>
        <position position="113"/>
    </location>
</feature>
<feature type="cross-link" description="Glycyl lysine isopeptide (Lys-Gly) (interchain with G-Cter in SUMO2); alternate" evidence="29">
    <location>
        <position position="6"/>
    </location>
</feature>
<feature type="cross-link" description="Glycyl lysine isopeptide (Lys-Gly) (interchain with G-Cter in SUMO2); alternate" evidence="5">
    <location>
        <position position="21"/>
    </location>
</feature>
<feature type="cross-link" description="Glycyl lysine isopeptide (Lys-Gly) (interchain with G-Cter in ubiquitin); alternate" evidence="15">
    <location>
        <position position="35"/>
    </location>
</feature>
<feature type="cross-link" description="Glycyl lysine isopeptide (Lys-Gly) (interchain with G-Cter in ubiquitin); alternate" evidence="12 13">
    <location>
        <position position="121"/>
    </location>
</feature>
<feature type="sequence variant" id="VAR_036205" description="In a colorectal cancer sample; somatic mutation." evidence="14">
    <original>H</original>
    <variation>Y</variation>
    <location>
        <position position="110"/>
    </location>
</feature>
<feature type="sequence conflict" description="In Ref. 4; AAH67487." evidence="26" ref="4">
    <original>G</original>
    <variation>R</variation>
    <location>
        <position position="76"/>
    </location>
</feature>
<comment type="function">
    <text>Core component of nucleosome. Nucleosomes wrap and compact DNA into chromatin, limiting DNA accessibility to the cellular machineries which require DNA as a template. Histones thereby play a central role in transcription regulation, DNA repair, DNA replication and chromosomal stability. DNA accessibility is regulated via a complex set of post-translational modifications of histones, also called histone code, and nucleosome remodeling.</text>
</comment>
<comment type="subunit">
    <text>The nucleosome is a histone octamer containing two molecules each of H2A, H2B, H3 and H4 assembled in one H3-H4 heterotetramer and two H2A-H2B heterodimers. The octamer wraps approximately 147 bp of DNA.</text>
</comment>
<comment type="subcellular location">
    <subcellularLocation>
        <location>Nucleus</location>
    </subcellularLocation>
    <subcellularLocation>
        <location>Chromosome</location>
    </subcellularLocation>
</comment>
<comment type="PTM">
    <text>Monoubiquitination at Lys-35 (H2BK34Ub) by the MSL1/MSL2 dimer is required for histone H3 'Lys-4' (H3K4me) and 'Lys-79' (H3K79me) methylation and transcription activation at specific gene loci, such as HOXA9 and MEIS1 loci. Similarly, monoubiquitination at Lys-121 (H2BK120Ub) by the RNF20/40 complex gives a specific tag for epigenetic transcriptional activation and is also prerequisite for histone H3 'Lys-4' and 'Lys-79' methylation. It also functions cooperatively with the FACT dimer to stimulate elongation by RNA polymerase II. H2BK120Ub also acts as a regulator of mRNA splicing: deubiquitination by USP49 is required for efficient cotranscriptional splicing of a large set of exons.</text>
</comment>
<comment type="PTM">
    <text evidence="6 10">Phosphorylation at Ser-37 (H2BS36ph) by AMPK in response to stress promotes transcription (By similarity). Phosphorylated on Ser-15 (H2BS14ph) by STK4/MST1 during apoptosis; which facilitates apoptotic chromatin condensation (PubMed:12757711). Also phosphorylated on Ser-15 in response to DNA double strand breaks (DSBs), and in correlation with somatic hypermutation and immunoglobulin class-switch recombination.</text>
</comment>
<comment type="PTM">
    <text evidence="3">GlcNAcylation at Ser-113 promotes monoubiquitination of Lys-121. It fluctuates in response to extracellular glucose, and associates with transcribed genes (By similarity).</text>
</comment>
<comment type="PTM">
    <text evidence="7 21 22 25">ADP-ribosylated by PARP1 or PARP2 on Ser-7 (H2BS6ADPr) in response to DNA damage (PubMed:27723750, PubMed:34874266). H2BS6ADPr promotes recruitment of CHD1L (PubMed:34874266). Mono-ADP-ribosylated on Glu-3 (H2BE2ADPr) by PARP3 in response to single-strand breaks (PubMed:27530147). Poly ADP-ribosylation on Glu-36 (H2BE35ADPr) by PARP1 regulates adipogenesis: it inhibits phosphorylation at Ser-37 (H2BS36ph), thereby blocking expression of pro-adipogenetic genes (By similarity).</text>
</comment>
<comment type="PTM">
    <text evidence="16">Crotonylation (Kcr) is specifically present in male germ cells and marks testis-specific genes in post-meiotic cells, including X-linked genes that escape sex chromosome inactivation in haploid cells. Crotonylation marks active promoters and enhancers and confers resistance to transcriptional repressors. It is also associated with post-meiotically activated genes on autosomes.</text>
</comment>
<comment type="PTM">
    <text evidence="24">Lactylated in macrophages by EP300/P300 by using lactoyl-CoA directly derived from endogenous or exogenous lactate, leading to stimulates gene transcription.</text>
</comment>
<comment type="similarity">
    <text evidence="26">Belongs to the histone H2B family.</text>
</comment>